<name>RS19_LISMC</name>
<feature type="chain" id="PRO_1000211812" description="Small ribosomal subunit protein uS19">
    <location>
        <begin position="1"/>
        <end position="92"/>
    </location>
</feature>
<proteinExistence type="inferred from homology"/>
<reference key="1">
    <citation type="journal article" date="2012" name="BMC Genomics">
        <title>Comparative genomics and transcriptomics of lineages I, II, and III strains of Listeria monocytogenes.</title>
        <authorList>
            <person name="Hain T."/>
            <person name="Ghai R."/>
            <person name="Billion A."/>
            <person name="Kuenne C.T."/>
            <person name="Steinweg C."/>
            <person name="Izar B."/>
            <person name="Mohamed W."/>
            <person name="Mraheil M."/>
            <person name="Domann E."/>
            <person name="Schaffrath S."/>
            <person name="Karst U."/>
            <person name="Goesmann A."/>
            <person name="Oehm S."/>
            <person name="Puhler A."/>
            <person name="Merkl R."/>
            <person name="Vorwerk S."/>
            <person name="Glaser P."/>
            <person name="Garrido P."/>
            <person name="Rusniok C."/>
            <person name="Buchrieser C."/>
            <person name="Goebel W."/>
            <person name="Chakraborty T."/>
        </authorList>
    </citation>
    <scope>NUCLEOTIDE SEQUENCE [LARGE SCALE GENOMIC DNA]</scope>
    <source>
        <strain>CLIP80459</strain>
    </source>
</reference>
<comment type="function">
    <text evidence="1">Protein S19 forms a complex with S13 that binds strongly to the 16S ribosomal RNA.</text>
</comment>
<comment type="similarity">
    <text evidence="1">Belongs to the universal ribosomal protein uS19 family.</text>
</comment>
<gene>
    <name evidence="1" type="primary">rpsS</name>
    <name type="ordered locus">Lm4b_02595</name>
</gene>
<keyword id="KW-0687">Ribonucleoprotein</keyword>
<keyword id="KW-0689">Ribosomal protein</keyword>
<keyword id="KW-0694">RNA-binding</keyword>
<keyword id="KW-0699">rRNA-binding</keyword>
<sequence length="92" mass="10475">MGRSLKKGPFVDDHLMKKVEAAAESEKKQVIKTWSRRSTIFPTFVGQTIAVYDGRKHVPVYVQEDMVGHKLGEFAPTRTYRGHAGDDKKTKR</sequence>
<dbReference type="EMBL" id="FM242711">
    <property type="protein sequence ID" value="CAS06349.1"/>
    <property type="molecule type" value="Genomic_DNA"/>
</dbReference>
<dbReference type="RefSeq" id="WP_003720946.1">
    <property type="nucleotide sequence ID" value="NC_012488.1"/>
</dbReference>
<dbReference type="SMR" id="C1KZH6"/>
<dbReference type="GeneID" id="93236050"/>
<dbReference type="KEGG" id="lmc:Lm4b_02595"/>
<dbReference type="HOGENOM" id="CLU_144911_0_1_9"/>
<dbReference type="GO" id="GO:0005737">
    <property type="term" value="C:cytoplasm"/>
    <property type="evidence" value="ECO:0007669"/>
    <property type="project" value="UniProtKB-ARBA"/>
</dbReference>
<dbReference type="GO" id="GO:0015935">
    <property type="term" value="C:small ribosomal subunit"/>
    <property type="evidence" value="ECO:0007669"/>
    <property type="project" value="InterPro"/>
</dbReference>
<dbReference type="GO" id="GO:0019843">
    <property type="term" value="F:rRNA binding"/>
    <property type="evidence" value="ECO:0007669"/>
    <property type="project" value="UniProtKB-UniRule"/>
</dbReference>
<dbReference type="GO" id="GO:0003735">
    <property type="term" value="F:structural constituent of ribosome"/>
    <property type="evidence" value="ECO:0007669"/>
    <property type="project" value="InterPro"/>
</dbReference>
<dbReference type="GO" id="GO:0000028">
    <property type="term" value="P:ribosomal small subunit assembly"/>
    <property type="evidence" value="ECO:0007669"/>
    <property type="project" value="TreeGrafter"/>
</dbReference>
<dbReference type="GO" id="GO:0006412">
    <property type="term" value="P:translation"/>
    <property type="evidence" value="ECO:0007669"/>
    <property type="project" value="UniProtKB-UniRule"/>
</dbReference>
<dbReference type="FunFam" id="3.30.860.10:FF:000001">
    <property type="entry name" value="30S ribosomal protein S19"/>
    <property type="match status" value="1"/>
</dbReference>
<dbReference type="Gene3D" id="3.30.860.10">
    <property type="entry name" value="30s Ribosomal Protein S19, Chain A"/>
    <property type="match status" value="1"/>
</dbReference>
<dbReference type="HAMAP" id="MF_00531">
    <property type="entry name" value="Ribosomal_uS19"/>
    <property type="match status" value="1"/>
</dbReference>
<dbReference type="InterPro" id="IPR002222">
    <property type="entry name" value="Ribosomal_uS19"/>
</dbReference>
<dbReference type="InterPro" id="IPR005732">
    <property type="entry name" value="Ribosomal_uS19_bac-type"/>
</dbReference>
<dbReference type="InterPro" id="IPR020934">
    <property type="entry name" value="Ribosomal_uS19_CS"/>
</dbReference>
<dbReference type="InterPro" id="IPR023575">
    <property type="entry name" value="Ribosomal_uS19_SF"/>
</dbReference>
<dbReference type="NCBIfam" id="TIGR01050">
    <property type="entry name" value="rpsS_bact"/>
    <property type="match status" value="1"/>
</dbReference>
<dbReference type="PANTHER" id="PTHR11880">
    <property type="entry name" value="RIBOSOMAL PROTEIN S19P FAMILY MEMBER"/>
    <property type="match status" value="1"/>
</dbReference>
<dbReference type="PANTHER" id="PTHR11880:SF8">
    <property type="entry name" value="SMALL RIBOSOMAL SUBUNIT PROTEIN US19M"/>
    <property type="match status" value="1"/>
</dbReference>
<dbReference type="Pfam" id="PF00203">
    <property type="entry name" value="Ribosomal_S19"/>
    <property type="match status" value="1"/>
</dbReference>
<dbReference type="PIRSF" id="PIRSF002144">
    <property type="entry name" value="Ribosomal_S19"/>
    <property type="match status" value="1"/>
</dbReference>
<dbReference type="PRINTS" id="PR00975">
    <property type="entry name" value="RIBOSOMALS19"/>
</dbReference>
<dbReference type="SUPFAM" id="SSF54570">
    <property type="entry name" value="Ribosomal protein S19"/>
    <property type="match status" value="1"/>
</dbReference>
<dbReference type="PROSITE" id="PS00323">
    <property type="entry name" value="RIBOSOMAL_S19"/>
    <property type="match status" value="1"/>
</dbReference>
<evidence type="ECO:0000255" key="1">
    <source>
        <dbReference type="HAMAP-Rule" id="MF_00531"/>
    </source>
</evidence>
<evidence type="ECO:0000305" key="2"/>
<protein>
    <recommendedName>
        <fullName evidence="1">Small ribosomal subunit protein uS19</fullName>
    </recommendedName>
    <alternativeName>
        <fullName evidence="2">30S ribosomal protein S19</fullName>
    </alternativeName>
</protein>
<organism>
    <name type="scientific">Listeria monocytogenes serotype 4b (strain CLIP80459)</name>
    <dbReference type="NCBI Taxonomy" id="568819"/>
    <lineage>
        <taxon>Bacteria</taxon>
        <taxon>Bacillati</taxon>
        <taxon>Bacillota</taxon>
        <taxon>Bacilli</taxon>
        <taxon>Bacillales</taxon>
        <taxon>Listeriaceae</taxon>
        <taxon>Listeria</taxon>
    </lineage>
</organism>
<accession>C1KZH6</accession>